<dbReference type="EMBL" id="X56781">
    <property type="protein sequence ID" value="CAA40101.1"/>
    <property type="molecule type" value="mRNA"/>
</dbReference>
<dbReference type="EMBL" id="M28704">
    <property type="protein sequence ID" value="AAA34293.1"/>
    <property type="molecule type" value="mRNA"/>
</dbReference>
<dbReference type="EMBL" id="D38111">
    <property type="protein sequence ID" value="BAA07289.1"/>
    <property type="molecule type" value="Genomic_DNA"/>
</dbReference>
<dbReference type="PIR" id="S77570">
    <property type="entry name" value="S77570"/>
</dbReference>
<dbReference type="RefSeq" id="NP_001392703.1">
    <property type="nucleotide sequence ID" value="NM_001405774.1"/>
</dbReference>
<dbReference type="SMR" id="P23922"/>
<dbReference type="PaxDb" id="4565-Traes_6BS_05264DAEA.2"/>
<dbReference type="EnsemblPlants" id="TraesARI6B03G03418630.1">
    <property type="protein sequence ID" value="TraesARI6B03G03418630.1"/>
    <property type="gene ID" value="TraesARI6B03G03418630"/>
</dbReference>
<dbReference type="EnsemblPlants" id="TraesARI6B03G03418630.3">
    <property type="protein sequence ID" value="TraesARI6B03G03418630.3"/>
    <property type="gene ID" value="TraesARI6B03G03418630"/>
</dbReference>
<dbReference type="EnsemblPlants" id="TraesCAD_scaffold_071998_01G000200.1">
    <property type="protein sequence ID" value="TraesCAD_scaffold_071998_01G000200.1"/>
    <property type="gene ID" value="TraesCAD_scaffold_071998_01G000200"/>
</dbReference>
<dbReference type="EnsemblPlants" id="TraesCLE_scaffold_114088_01G000100.1">
    <property type="protein sequence ID" value="TraesCLE_scaffold_114088_01G000100.1"/>
    <property type="gene ID" value="TraesCLE_scaffold_114088_01G000100"/>
</dbReference>
<dbReference type="EnsemblPlants" id="TraesCS6B02G110100.1">
    <property type="protein sequence ID" value="TraesCS6B02G110100.1"/>
    <property type="gene ID" value="TraesCS6B02G110100"/>
</dbReference>
<dbReference type="EnsemblPlants" id="TraesCS6B03G0268300.2">
    <property type="protein sequence ID" value="TraesCS6B03G0268300.2.CDS"/>
    <property type="gene ID" value="TraesCS6B03G0268300"/>
</dbReference>
<dbReference type="EnsemblPlants" id="TraesJUL6B03G03487090.1">
    <property type="protein sequence ID" value="TraesJUL6B03G03487090.1"/>
    <property type="gene ID" value="TraesJUL6B03G03487090"/>
</dbReference>
<dbReference type="EnsemblPlants" id="TraesJUL6B03G03487090.2">
    <property type="protein sequence ID" value="TraesJUL6B03G03487090.2"/>
    <property type="gene ID" value="TraesJUL6B03G03487090"/>
</dbReference>
<dbReference type="EnsemblPlants" id="TraesKAR6B01G0066460.2">
    <property type="protein sequence ID" value="cds.TraesKAR6B01G0066460.2"/>
    <property type="gene ID" value="TraesKAR6B01G0066460"/>
</dbReference>
<dbReference type="EnsemblPlants" id="TraesLAC6B03G03414630.1">
    <property type="protein sequence ID" value="TraesLAC6B03G03414630.1"/>
    <property type="gene ID" value="TraesLAC6B03G03414630"/>
</dbReference>
<dbReference type="EnsemblPlants" id="TraesLAC6B03G03414630.5">
    <property type="protein sequence ID" value="TraesLAC6B03G03414630.5"/>
    <property type="gene ID" value="TraesLAC6B03G03414630"/>
</dbReference>
<dbReference type="EnsemblPlants" id="TraesLDM6B03G03465600.1">
    <property type="protein sequence ID" value="TraesLDM6B03G03465600.1"/>
    <property type="gene ID" value="TraesLDM6B03G03465600"/>
</dbReference>
<dbReference type="EnsemblPlants" id="TraesLDM6B03G03465600.2">
    <property type="protein sequence ID" value="TraesLDM6B03G03465600.2"/>
    <property type="gene ID" value="TraesLDM6B03G03465600"/>
</dbReference>
<dbReference type="EnsemblPlants" id="TraesMAC6B03G03458570.1">
    <property type="protein sequence ID" value="TraesMAC6B03G03458570.1"/>
    <property type="gene ID" value="TraesMAC6B03G03458570"/>
</dbReference>
<dbReference type="EnsemblPlants" id="TraesNOR6B03G03493460.1">
    <property type="protein sequence ID" value="TraesNOR6B03G03493460.1"/>
    <property type="gene ID" value="TraesNOR6B03G03493460"/>
</dbReference>
<dbReference type="EnsemblPlants" id="TraesPARA_EIv1.0_2022330.1">
    <property type="protein sequence ID" value="TraesPARA_EIv1.0_2022330.1.CDS"/>
    <property type="gene ID" value="TraesPARA_EIv1.0_2022330"/>
</dbReference>
<dbReference type="EnsemblPlants" id="TraesPARA_EIv1.0_2022330.3">
    <property type="protein sequence ID" value="TraesPARA_EIv1.0_2022330.3.CDS"/>
    <property type="gene ID" value="TraesPARA_EIv1.0_2022330"/>
</dbReference>
<dbReference type="EnsemblPlants" id="TraesROB_scaffold_074901_01G000200.1">
    <property type="protein sequence ID" value="TraesROB_scaffold_074901_01G000200.1"/>
    <property type="gene ID" value="TraesROB_scaffold_074901_01G000200"/>
</dbReference>
<dbReference type="EnsemblPlants" id="TraesSTA6B03G03451580.1">
    <property type="protein sequence ID" value="TraesSTA6B03G03451580.1"/>
    <property type="gene ID" value="TraesSTA6B03G03451580"/>
</dbReference>
<dbReference type="EnsemblPlants" id="TraesSTA6B03G03451580.6">
    <property type="protein sequence ID" value="TraesSTA6B03G03451580.6"/>
    <property type="gene ID" value="TraesSTA6B03G03451580"/>
</dbReference>
<dbReference type="EnsemblPlants" id="TraesSYM6B03G03402890.1">
    <property type="protein sequence ID" value="TraesSYM6B03G03402890.1"/>
    <property type="gene ID" value="TraesSYM6B03G03402890"/>
</dbReference>
<dbReference type="EnsemblPlants" id="TraesWEE_scaffold_070911_01G000200.1">
    <property type="protein sequence ID" value="TraesWEE_scaffold_070911_01G000200.1"/>
    <property type="gene ID" value="TraesWEE_scaffold_070911_01G000200"/>
</dbReference>
<dbReference type="GeneID" id="125179615"/>
<dbReference type="Gramene" id="TraesARI6B03G03418630.1">
    <property type="protein sequence ID" value="TraesARI6B03G03418630.1"/>
    <property type="gene ID" value="TraesARI6B03G03418630"/>
</dbReference>
<dbReference type="Gramene" id="TraesARI6B03G03418630.3">
    <property type="protein sequence ID" value="TraesARI6B03G03418630.3"/>
    <property type="gene ID" value="TraesARI6B03G03418630"/>
</dbReference>
<dbReference type="Gramene" id="TraesCAD_scaffold_071998_01G000200.1">
    <property type="protein sequence ID" value="TraesCAD_scaffold_071998_01G000200.1"/>
    <property type="gene ID" value="TraesCAD_scaffold_071998_01G000200"/>
</dbReference>
<dbReference type="Gramene" id="TraesCLE_scaffold_114088_01G000100.1">
    <property type="protein sequence ID" value="TraesCLE_scaffold_114088_01G000100.1"/>
    <property type="gene ID" value="TraesCLE_scaffold_114088_01G000100"/>
</dbReference>
<dbReference type="Gramene" id="TraesCS6B02G110100.1">
    <property type="protein sequence ID" value="TraesCS6B02G110100.1"/>
    <property type="gene ID" value="TraesCS6B02G110100"/>
</dbReference>
<dbReference type="Gramene" id="TraesCS6B03G0268300.2">
    <property type="protein sequence ID" value="TraesCS6B03G0268300.2.CDS"/>
    <property type="gene ID" value="TraesCS6B03G0268300"/>
</dbReference>
<dbReference type="Gramene" id="TraesJUL6B03G03487090.1">
    <property type="protein sequence ID" value="TraesJUL6B03G03487090.1"/>
    <property type="gene ID" value="TraesJUL6B03G03487090"/>
</dbReference>
<dbReference type="Gramene" id="TraesJUL6B03G03487090.2">
    <property type="protein sequence ID" value="TraesJUL6B03G03487090.2"/>
    <property type="gene ID" value="TraesJUL6B03G03487090"/>
</dbReference>
<dbReference type="Gramene" id="TraesKAR6B01G0066460.2">
    <property type="protein sequence ID" value="cds.TraesKAR6B01G0066460.2"/>
    <property type="gene ID" value="TraesKAR6B01G0066460"/>
</dbReference>
<dbReference type="Gramene" id="TraesLAC6B03G03414630.1">
    <property type="protein sequence ID" value="TraesLAC6B03G03414630.1"/>
    <property type="gene ID" value="TraesLAC6B03G03414630"/>
</dbReference>
<dbReference type="Gramene" id="TraesLAC6B03G03414630.5">
    <property type="protein sequence ID" value="TraesLAC6B03G03414630.5"/>
    <property type="gene ID" value="TraesLAC6B03G03414630"/>
</dbReference>
<dbReference type="Gramene" id="TraesLDM6B03G03465600.1">
    <property type="protein sequence ID" value="TraesLDM6B03G03465600.1"/>
    <property type="gene ID" value="TraesLDM6B03G03465600"/>
</dbReference>
<dbReference type="Gramene" id="TraesLDM6B03G03465600.2">
    <property type="protein sequence ID" value="TraesLDM6B03G03465600.2"/>
    <property type="gene ID" value="TraesLDM6B03G03465600"/>
</dbReference>
<dbReference type="Gramene" id="TraesMAC6B03G03458570.1">
    <property type="protein sequence ID" value="TraesMAC6B03G03458570.1"/>
    <property type="gene ID" value="TraesMAC6B03G03458570"/>
</dbReference>
<dbReference type="Gramene" id="TraesNOR6B03G03493460.1">
    <property type="protein sequence ID" value="TraesNOR6B03G03493460.1"/>
    <property type="gene ID" value="TraesNOR6B03G03493460"/>
</dbReference>
<dbReference type="Gramene" id="TraesPARA_EIv1.0_2022330.1">
    <property type="protein sequence ID" value="TraesPARA_EIv1.0_2022330.1.CDS"/>
    <property type="gene ID" value="TraesPARA_EIv1.0_2022330"/>
</dbReference>
<dbReference type="Gramene" id="TraesPARA_EIv1.0_2022330.3">
    <property type="protein sequence ID" value="TraesPARA_EIv1.0_2022330.3.CDS"/>
    <property type="gene ID" value="TraesPARA_EIv1.0_2022330"/>
</dbReference>
<dbReference type="Gramene" id="TraesROB_scaffold_074901_01G000200.1">
    <property type="protein sequence ID" value="TraesROB_scaffold_074901_01G000200.1"/>
    <property type="gene ID" value="TraesROB_scaffold_074901_01G000200"/>
</dbReference>
<dbReference type="Gramene" id="TraesSTA6B03G03451580.1">
    <property type="protein sequence ID" value="TraesSTA6B03G03451580.1"/>
    <property type="gene ID" value="TraesSTA6B03G03451580"/>
</dbReference>
<dbReference type="Gramene" id="TraesSTA6B03G03451580.6">
    <property type="protein sequence ID" value="TraesSTA6B03G03451580.6"/>
    <property type="gene ID" value="TraesSTA6B03G03451580"/>
</dbReference>
<dbReference type="Gramene" id="TraesSYM6B03G03402890.1">
    <property type="protein sequence ID" value="TraesSYM6B03G03402890.1"/>
    <property type="gene ID" value="TraesSYM6B03G03402890"/>
</dbReference>
<dbReference type="Gramene" id="TraesWEE_scaffold_070911_01G000200.1">
    <property type="protein sequence ID" value="TraesWEE_scaffold_070911_01G000200.1"/>
    <property type="gene ID" value="TraesWEE_scaffold_070911_01G000200"/>
</dbReference>
<dbReference type="eggNOG" id="ENOG502QUJX">
    <property type="taxonomic scope" value="Eukaryota"/>
</dbReference>
<dbReference type="OMA" id="APKYLFQ"/>
<dbReference type="OrthoDB" id="1642657at2759"/>
<dbReference type="Proteomes" id="UP000019116">
    <property type="component" value="Chromosome 6B"/>
</dbReference>
<dbReference type="ExpressionAtlas" id="P23922">
    <property type="expression patterns" value="baseline"/>
</dbReference>
<dbReference type="GO" id="GO:0005634">
    <property type="term" value="C:nucleus"/>
    <property type="evidence" value="ECO:0000318"/>
    <property type="project" value="GO_Central"/>
</dbReference>
<dbReference type="GO" id="GO:0003700">
    <property type="term" value="F:DNA-binding transcription factor activity"/>
    <property type="evidence" value="ECO:0007669"/>
    <property type="project" value="InterPro"/>
</dbReference>
<dbReference type="GO" id="GO:0043565">
    <property type="term" value="F:sequence-specific DNA binding"/>
    <property type="evidence" value="ECO:0000318"/>
    <property type="project" value="GO_Central"/>
</dbReference>
<dbReference type="GO" id="GO:0000976">
    <property type="term" value="F:transcription cis-regulatory region binding"/>
    <property type="evidence" value="ECO:0007669"/>
    <property type="project" value="UniProtKB-ARBA"/>
</dbReference>
<dbReference type="GO" id="GO:0006355">
    <property type="term" value="P:regulation of DNA-templated transcription"/>
    <property type="evidence" value="ECO:0000318"/>
    <property type="project" value="GO_Central"/>
</dbReference>
<dbReference type="CDD" id="cd14702">
    <property type="entry name" value="bZIP_plant_GBF1"/>
    <property type="match status" value="1"/>
</dbReference>
<dbReference type="FunFam" id="1.20.5.170:FF:000020">
    <property type="entry name" value="BZIP transcription factor"/>
    <property type="match status" value="1"/>
</dbReference>
<dbReference type="Gene3D" id="1.20.5.170">
    <property type="match status" value="1"/>
</dbReference>
<dbReference type="InterPro" id="IPR004827">
    <property type="entry name" value="bZIP"/>
</dbReference>
<dbReference type="InterPro" id="IPR045314">
    <property type="entry name" value="bZIP_plant_GBF1"/>
</dbReference>
<dbReference type="InterPro" id="IPR046347">
    <property type="entry name" value="bZIP_sf"/>
</dbReference>
<dbReference type="InterPro" id="IPR044827">
    <property type="entry name" value="GBF-like"/>
</dbReference>
<dbReference type="InterPro" id="IPR012900">
    <property type="entry name" value="MFMR"/>
</dbReference>
<dbReference type="PANTHER" id="PTHR45967">
    <property type="entry name" value="G-BOX-BINDING FACTOR 3-RELATED"/>
    <property type="match status" value="1"/>
</dbReference>
<dbReference type="PANTHER" id="PTHR45967:SF12">
    <property type="entry name" value="TRANSCRIPTION FACTOR HBP-1A"/>
    <property type="match status" value="1"/>
</dbReference>
<dbReference type="Pfam" id="PF00170">
    <property type="entry name" value="bZIP_1"/>
    <property type="match status" value="1"/>
</dbReference>
<dbReference type="Pfam" id="PF07777">
    <property type="entry name" value="MFMR"/>
    <property type="match status" value="1"/>
</dbReference>
<dbReference type="Pfam" id="PF16596">
    <property type="entry name" value="MFMR_assoc"/>
    <property type="match status" value="1"/>
</dbReference>
<dbReference type="SMART" id="SM00338">
    <property type="entry name" value="BRLZ"/>
    <property type="match status" value="1"/>
</dbReference>
<dbReference type="SUPFAM" id="SSF57959">
    <property type="entry name" value="Leucine zipper domain"/>
    <property type="match status" value="1"/>
</dbReference>
<dbReference type="PROSITE" id="PS50217">
    <property type="entry name" value="BZIP"/>
    <property type="match status" value="1"/>
</dbReference>
<dbReference type="PROSITE" id="PS00036">
    <property type="entry name" value="BZIP_BASIC"/>
    <property type="match status" value="1"/>
</dbReference>
<evidence type="ECO:0000255" key="1">
    <source>
        <dbReference type="PROSITE-ProRule" id="PRU00978"/>
    </source>
</evidence>
<evidence type="ECO:0000256" key="2">
    <source>
        <dbReference type="SAM" id="MobiDB-lite"/>
    </source>
</evidence>
<evidence type="ECO:0000305" key="3"/>
<accession>P23922</accession>
<organism>
    <name type="scientific">Triticum aestivum</name>
    <name type="common">Wheat</name>
    <dbReference type="NCBI Taxonomy" id="4565"/>
    <lineage>
        <taxon>Eukaryota</taxon>
        <taxon>Viridiplantae</taxon>
        <taxon>Streptophyta</taxon>
        <taxon>Embryophyta</taxon>
        <taxon>Tracheophyta</taxon>
        <taxon>Spermatophyta</taxon>
        <taxon>Magnoliopsida</taxon>
        <taxon>Liliopsida</taxon>
        <taxon>Poales</taxon>
        <taxon>Poaceae</taxon>
        <taxon>BOP clade</taxon>
        <taxon>Pooideae</taxon>
        <taxon>Triticodae</taxon>
        <taxon>Triticeae</taxon>
        <taxon>Triticinae</taxon>
        <taxon>Triticum</taxon>
    </lineage>
</organism>
<proteinExistence type="evidence at transcript level"/>
<keyword id="KW-0010">Activator</keyword>
<keyword id="KW-0238">DNA-binding</keyword>
<keyword id="KW-0539">Nucleus</keyword>
<keyword id="KW-1185">Reference proteome</keyword>
<keyword id="KW-0804">Transcription</keyword>
<keyword id="KW-0805">Transcription regulation</keyword>
<name>HBP1A_WHEAT</name>
<protein>
    <recommendedName>
        <fullName>Transcription factor HBP-1a</fullName>
    </recommendedName>
    <alternativeName>
        <fullName>Histone-specific transcription factor HBP1</fullName>
    </alternativeName>
</protein>
<comment type="function">
    <text>Binds to the hexamer motif 5'-ACGTCA-3' of histone gene promoters.</text>
</comment>
<comment type="subunit">
    <text>Binds DNA as a dimer.</text>
</comment>
<comment type="subcellular location">
    <subcellularLocation>
        <location>Nucleus</location>
    </subcellularLocation>
</comment>
<comment type="similarity">
    <text evidence="3">Belongs to the bZIP family.</text>
</comment>
<feature type="chain" id="PRO_0000076550" description="Transcription factor HBP-1a">
    <location>
        <begin position="1"/>
        <end position="349"/>
    </location>
</feature>
<feature type="domain" description="bZIP" evidence="1">
    <location>
        <begin position="252"/>
        <end position="315"/>
    </location>
</feature>
<feature type="region of interest" description="Disordered" evidence="2">
    <location>
        <begin position="1"/>
        <end position="39"/>
    </location>
</feature>
<feature type="region of interest" description="Disordered" evidence="2">
    <location>
        <begin position="101"/>
        <end position="196"/>
    </location>
</feature>
<feature type="region of interest" description="Disordered" evidence="2">
    <location>
        <begin position="224"/>
        <end position="277"/>
    </location>
</feature>
<feature type="region of interest" description="Basic motif" evidence="1">
    <location>
        <begin position="254"/>
        <end position="273"/>
    </location>
</feature>
<feature type="region of interest" description="Leucine-zipper" evidence="1">
    <location>
        <begin position="280"/>
        <end position="315"/>
    </location>
</feature>
<feature type="region of interest" description="Disordered" evidence="2">
    <location>
        <begin position="312"/>
        <end position="349"/>
    </location>
</feature>
<feature type="compositionally biased region" description="Polar residues" evidence="2">
    <location>
        <begin position="1"/>
        <end position="11"/>
    </location>
</feature>
<feature type="compositionally biased region" description="Low complexity" evidence="2">
    <location>
        <begin position="113"/>
        <end position="124"/>
    </location>
</feature>
<feature type="compositionally biased region" description="Polar residues" evidence="2">
    <location>
        <begin position="174"/>
        <end position="191"/>
    </location>
</feature>
<feature type="compositionally biased region" description="Basic and acidic residues" evidence="2">
    <location>
        <begin position="261"/>
        <end position="277"/>
    </location>
</feature>
<feature type="compositionally biased region" description="Basic and acidic residues" evidence="2">
    <location>
        <begin position="334"/>
        <end position="349"/>
    </location>
</feature>
<reference key="1">
    <citation type="journal article" date="1991" name="EMBO J.">
        <title>HBP-1a and HBP-1b: leucine zipper-type transcription factors of wheat.</title>
        <authorList>
            <person name="Tabata T."/>
            <person name="Nakayama T."/>
            <person name="Mikami K."/>
            <person name="Iwabuchi M."/>
        </authorList>
    </citation>
    <scope>NUCLEOTIDE SEQUENCE [MRNA]</scope>
</reference>
<reference key="2">
    <citation type="journal article" date="1989" name="Science">
        <title>A protein that binds to a cis-acting element of wheat histone genes has a leucine zipper motif.</title>
        <authorList>
            <person name="Tabata T."/>
            <person name="Takase H."/>
            <person name="Takayama S."/>
            <person name="Mikami K."/>
            <person name="Nakatsuka A."/>
            <person name="Kawata T."/>
            <person name="Nakayama T."/>
            <person name="Iwabuchi M."/>
        </authorList>
    </citation>
    <scope>NUCLEOTIDE SEQUENCE [MRNA]</scope>
</reference>
<reference key="3">
    <citation type="journal article" date="1995" name="Mol. Gen. Genet.">
        <title>Developmental and tissue-specific regulation of the gene for the wheat basic/leucine zipper protein HBP-1a(17) in transgenic Arabidopsis plants.</title>
        <authorList>
            <person name="Mikami K."/>
            <person name="Katsura M."/>
            <person name="Ito T."/>
            <person name="Okada K."/>
            <person name="Shimura Y."/>
            <person name="Iwabuchi M."/>
        </authorList>
    </citation>
    <scope>NUCLEOTIDE SEQUENCE [GENOMIC DNA]</scope>
    <source>
        <strain>cv. Horoshirikomugi</strain>
    </source>
</reference>
<sequence length="349" mass="36743">MGSNDPSTPSKASKPPEQEQPPATTSGTTAPVYPEWPGFQGYPAMPPHGFFPPPVAAGQAHPYMWGPQHMVPPYGTPPPPYMMYPPGTVYAHPTAPGVHPFHYPMQTNGNLEPAGAQGAAPGAAETNGKNEPGKTSGPSANGVTSNSESGSDSESEGSDANSQNDSHSKENDVNENGSAQNGVSHSSSHGTFNKPMPLVPVQSGAVIGVAGPATNLNIGMDYWGATGSSPVPAMRGKVPSGSARGEQWDERELKKQKRKLSNRESARRSRLRKQAECEELGQRAEALKSENSSLRIELDRIKKEYEELLSKNTSLKAKLGESGGGGGSDAVPDMNERGDTNGGSHQKEP</sequence>